<protein>
    <recommendedName>
        <fullName evidence="1">Anthranilate phosphoribosyltransferase</fullName>
        <ecNumber evidence="1">2.4.2.18</ecNumber>
    </recommendedName>
</protein>
<reference key="1">
    <citation type="journal article" date="2007" name="Genome Biol.">
        <title>Characterization and modeling of the Haemophilus influenzae core and supragenomes based on the complete genomic sequences of Rd and 12 clinical nontypeable strains.</title>
        <authorList>
            <person name="Hogg J.S."/>
            <person name="Hu F.Z."/>
            <person name="Janto B."/>
            <person name="Boissy R."/>
            <person name="Hayes J."/>
            <person name="Keefe R."/>
            <person name="Post J.C."/>
            <person name="Ehrlich G.D."/>
        </authorList>
    </citation>
    <scope>NUCLEOTIDE SEQUENCE [LARGE SCALE GENOMIC DNA]</scope>
    <source>
        <strain>PittGG</strain>
    </source>
</reference>
<accession>A5UEN6</accession>
<organism>
    <name type="scientific">Haemophilus influenzae (strain PittGG)</name>
    <dbReference type="NCBI Taxonomy" id="374931"/>
    <lineage>
        <taxon>Bacteria</taxon>
        <taxon>Pseudomonadati</taxon>
        <taxon>Pseudomonadota</taxon>
        <taxon>Gammaproteobacteria</taxon>
        <taxon>Pasteurellales</taxon>
        <taxon>Pasteurellaceae</taxon>
        <taxon>Haemophilus</taxon>
    </lineage>
</organism>
<feature type="chain" id="PRO_1000043011" description="Anthranilate phosphoribosyltransferase">
    <location>
        <begin position="1"/>
        <end position="333"/>
    </location>
</feature>
<feature type="binding site" evidence="1">
    <location>
        <position position="81"/>
    </location>
    <ligand>
        <name>5-phospho-alpha-D-ribose 1-diphosphate</name>
        <dbReference type="ChEBI" id="CHEBI:58017"/>
    </ligand>
</feature>
<feature type="binding site" evidence="1">
    <location>
        <position position="81"/>
    </location>
    <ligand>
        <name>anthranilate</name>
        <dbReference type="ChEBI" id="CHEBI:16567"/>
        <label>1</label>
    </ligand>
</feature>
<feature type="binding site" evidence="1">
    <location>
        <begin position="84"/>
        <end position="85"/>
    </location>
    <ligand>
        <name>5-phospho-alpha-D-ribose 1-diphosphate</name>
        <dbReference type="ChEBI" id="CHEBI:58017"/>
    </ligand>
</feature>
<feature type="binding site" evidence="1">
    <location>
        <position position="89"/>
    </location>
    <ligand>
        <name>5-phospho-alpha-D-ribose 1-diphosphate</name>
        <dbReference type="ChEBI" id="CHEBI:58017"/>
    </ligand>
</feature>
<feature type="binding site" evidence="1">
    <location>
        <begin position="91"/>
        <end position="94"/>
    </location>
    <ligand>
        <name>5-phospho-alpha-D-ribose 1-diphosphate</name>
        <dbReference type="ChEBI" id="CHEBI:58017"/>
    </ligand>
</feature>
<feature type="binding site" evidence="1">
    <location>
        <position position="93"/>
    </location>
    <ligand>
        <name>Mg(2+)</name>
        <dbReference type="ChEBI" id="CHEBI:18420"/>
        <label>1</label>
    </ligand>
</feature>
<feature type="binding site" evidence="1">
    <location>
        <begin position="109"/>
        <end position="117"/>
    </location>
    <ligand>
        <name>5-phospho-alpha-D-ribose 1-diphosphate</name>
        <dbReference type="ChEBI" id="CHEBI:58017"/>
    </ligand>
</feature>
<feature type="binding site" evidence="1">
    <location>
        <position position="112"/>
    </location>
    <ligand>
        <name>anthranilate</name>
        <dbReference type="ChEBI" id="CHEBI:16567"/>
        <label>1</label>
    </ligand>
</feature>
<feature type="binding site" evidence="1">
    <location>
        <position position="121"/>
    </location>
    <ligand>
        <name>5-phospho-alpha-D-ribose 1-diphosphate</name>
        <dbReference type="ChEBI" id="CHEBI:58017"/>
    </ligand>
</feature>
<feature type="binding site" evidence="1">
    <location>
        <position position="167"/>
    </location>
    <ligand>
        <name>anthranilate</name>
        <dbReference type="ChEBI" id="CHEBI:16567"/>
        <label>2</label>
    </ligand>
</feature>
<feature type="binding site" evidence="1">
    <location>
        <position position="225"/>
    </location>
    <ligand>
        <name>Mg(2+)</name>
        <dbReference type="ChEBI" id="CHEBI:18420"/>
        <label>2</label>
    </ligand>
</feature>
<feature type="binding site" evidence="1">
    <location>
        <position position="226"/>
    </location>
    <ligand>
        <name>Mg(2+)</name>
        <dbReference type="ChEBI" id="CHEBI:18420"/>
        <label>1</label>
    </ligand>
</feature>
<feature type="binding site" evidence="1">
    <location>
        <position position="226"/>
    </location>
    <ligand>
        <name>Mg(2+)</name>
        <dbReference type="ChEBI" id="CHEBI:18420"/>
        <label>2</label>
    </ligand>
</feature>
<sequence>MQHNQLLEQLYSGHSLSTSESTALFNAVIQGELSNEQIAAMLIALKVREANTEEIAGAVAASLQNAKVFPRPDYPFADIVGTGGDGQNTINISTASAIVAASMGAKVAKHGNRSVSSKSGASDVLTALGVNVNVTPEQARQALDEIGVCFLFAQQYHSGFRHVAPVRAALKTHTIFNILGPLINPARPTYHLLGVYAPELVKTYAETAVALEHQHSFVVHGSGLDEVALHGETQVAEIKNGKIEYFTLTPEDFGLKTQSLESLRGGEPQKNAQYLTALLQGKGKAEHANTVAANTALLLKLFGYDDLKQNVQNVLAHLLSGKAFETLQKLTTY</sequence>
<dbReference type="EC" id="2.4.2.18" evidence="1"/>
<dbReference type="EMBL" id="CP000672">
    <property type="protein sequence ID" value="ABQ99241.1"/>
    <property type="molecule type" value="Genomic_DNA"/>
</dbReference>
<dbReference type="SMR" id="A5UEN6"/>
<dbReference type="KEGG" id="hiq:CGSHiGG_00710"/>
<dbReference type="HOGENOM" id="CLU_034315_2_1_6"/>
<dbReference type="UniPathway" id="UPA00035">
    <property type="reaction ID" value="UER00041"/>
</dbReference>
<dbReference type="Proteomes" id="UP000001990">
    <property type="component" value="Chromosome"/>
</dbReference>
<dbReference type="GO" id="GO:0005829">
    <property type="term" value="C:cytosol"/>
    <property type="evidence" value="ECO:0007669"/>
    <property type="project" value="TreeGrafter"/>
</dbReference>
<dbReference type="GO" id="GO:0004048">
    <property type="term" value="F:anthranilate phosphoribosyltransferase activity"/>
    <property type="evidence" value="ECO:0007669"/>
    <property type="project" value="UniProtKB-UniRule"/>
</dbReference>
<dbReference type="GO" id="GO:0000287">
    <property type="term" value="F:magnesium ion binding"/>
    <property type="evidence" value="ECO:0007669"/>
    <property type="project" value="UniProtKB-UniRule"/>
</dbReference>
<dbReference type="GO" id="GO:0000162">
    <property type="term" value="P:L-tryptophan biosynthetic process"/>
    <property type="evidence" value="ECO:0007669"/>
    <property type="project" value="UniProtKB-UniRule"/>
</dbReference>
<dbReference type="FunFam" id="1.20.970.10:FF:000003">
    <property type="entry name" value="Anthranilate phosphoribosyltransferase"/>
    <property type="match status" value="1"/>
</dbReference>
<dbReference type="FunFam" id="3.40.1030.10:FF:000002">
    <property type="entry name" value="Anthranilate phosphoribosyltransferase"/>
    <property type="match status" value="1"/>
</dbReference>
<dbReference type="Gene3D" id="3.40.1030.10">
    <property type="entry name" value="Nucleoside phosphorylase/phosphoribosyltransferase catalytic domain"/>
    <property type="match status" value="1"/>
</dbReference>
<dbReference type="Gene3D" id="1.20.970.10">
    <property type="entry name" value="Transferase, Pyrimidine Nucleoside Phosphorylase, Chain C"/>
    <property type="match status" value="1"/>
</dbReference>
<dbReference type="HAMAP" id="MF_00211">
    <property type="entry name" value="TrpD"/>
    <property type="match status" value="1"/>
</dbReference>
<dbReference type="InterPro" id="IPR005940">
    <property type="entry name" value="Anthranilate_Pribosyl_Tfrase"/>
</dbReference>
<dbReference type="InterPro" id="IPR000312">
    <property type="entry name" value="Glycosyl_Trfase_fam3"/>
</dbReference>
<dbReference type="InterPro" id="IPR017459">
    <property type="entry name" value="Glycosyl_Trfase_fam3_N_dom"/>
</dbReference>
<dbReference type="InterPro" id="IPR036320">
    <property type="entry name" value="Glycosyl_Trfase_fam3_N_dom_sf"/>
</dbReference>
<dbReference type="InterPro" id="IPR035902">
    <property type="entry name" value="Nuc_phospho_transferase"/>
</dbReference>
<dbReference type="NCBIfam" id="TIGR01245">
    <property type="entry name" value="trpD"/>
    <property type="match status" value="1"/>
</dbReference>
<dbReference type="PANTHER" id="PTHR43285">
    <property type="entry name" value="ANTHRANILATE PHOSPHORIBOSYLTRANSFERASE"/>
    <property type="match status" value="1"/>
</dbReference>
<dbReference type="PANTHER" id="PTHR43285:SF2">
    <property type="entry name" value="ANTHRANILATE PHOSPHORIBOSYLTRANSFERASE"/>
    <property type="match status" value="1"/>
</dbReference>
<dbReference type="Pfam" id="PF02885">
    <property type="entry name" value="Glycos_trans_3N"/>
    <property type="match status" value="1"/>
</dbReference>
<dbReference type="Pfam" id="PF00591">
    <property type="entry name" value="Glycos_transf_3"/>
    <property type="match status" value="1"/>
</dbReference>
<dbReference type="SUPFAM" id="SSF52418">
    <property type="entry name" value="Nucleoside phosphorylase/phosphoribosyltransferase catalytic domain"/>
    <property type="match status" value="1"/>
</dbReference>
<dbReference type="SUPFAM" id="SSF47648">
    <property type="entry name" value="Nucleoside phosphorylase/phosphoribosyltransferase N-terminal domain"/>
    <property type="match status" value="1"/>
</dbReference>
<comment type="function">
    <text evidence="1">Catalyzes the transfer of the phosphoribosyl group of 5-phosphorylribose-1-pyrophosphate (PRPP) to anthranilate to yield N-(5'-phosphoribosyl)-anthranilate (PRA).</text>
</comment>
<comment type="catalytic activity">
    <reaction evidence="1">
        <text>N-(5-phospho-beta-D-ribosyl)anthranilate + diphosphate = 5-phospho-alpha-D-ribose 1-diphosphate + anthranilate</text>
        <dbReference type="Rhea" id="RHEA:11768"/>
        <dbReference type="ChEBI" id="CHEBI:16567"/>
        <dbReference type="ChEBI" id="CHEBI:18277"/>
        <dbReference type="ChEBI" id="CHEBI:33019"/>
        <dbReference type="ChEBI" id="CHEBI:58017"/>
        <dbReference type="EC" id="2.4.2.18"/>
    </reaction>
</comment>
<comment type="cofactor">
    <cofactor evidence="1">
        <name>Mg(2+)</name>
        <dbReference type="ChEBI" id="CHEBI:18420"/>
    </cofactor>
    <text evidence="1">Binds 2 magnesium ions per monomer.</text>
</comment>
<comment type="pathway">
    <text evidence="1">Amino-acid biosynthesis; L-tryptophan biosynthesis; L-tryptophan from chorismate: step 2/5.</text>
</comment>
<comment type="subunit">
    <text evidence="1">Homodimer.</text>
</comment>
<comment type="similarity">
    <text evidence="1">Belongs to the anthranilate phosphoribosyltransferase family.</text>
</comment>
<keyword id="KW-0028">Amino-acid biosynthesis</keyword>
<keyword id="KW-0057">Aromatic amino acid biosynthesis</keyword>
<keyword id="KW-0328">Glycosyltransferase</keyword>
<keyword id="KW-0460">Magnesium</keyword>
<keyword id="KW-0479">Metal-binding</keyword>
<keyword id="KW-0808">Transferase</keyword>
<keyword id="KW-0822">Tryptophan biosynthesis</keyword>
<gene>
    <name evidence="1" type="primary">trpD</name>
    <name type="ordered locus">CGSHiGG_00710</name>
</gene>
<evidence type="ECO:0000255" key="1">
    <source>
        <dbReference type="HAMAP-Rule" id="MF_00211"/>
    </source>
</evidence>
<name>TRPD_HAEIG</name>
<proteinExistence type="inferred from homology"/>